<feature type="chain" id="PRO_0000180664" description="Glucose-6-phosphate isomerase">
    <location>
        <begin position="1"/>
        <end position="499"/>
    </location>
</feature>
<feature type="active site" description="Proton donor" evidence="1">
    <location>
        <position position="352"/>
    </location>
</feature>
<feature type="active site" evidence="1">
    <location>
        <position position="383"/>
    </location>
</feature>
<feature type="active site" evidence="1">
    <location>
        <position position="487"/>
    </location>
</feature>
<accession>Q5ZXH2</accession>
<comment type="function">
    <text evidence="1">Catalyzes the reversible isomerization of glucose-6-phosphate to fructose-6-phosphate.</text>
</comment>
<comment type="catalytic activity">
    <reaction evidence="1">
        <text>alpha-D-glucose 6-phosphate = beta-D-fructose 6-phosphate</text>
        <dbReference type="Rhea" id="RHEA:11816"/>
        <dbReference type="ChEBI" id="CHEBI:57634"/>
        <dbReference type="ChEBI" id="CHEBI:58225"/>
        <dbReference type="EC" id="5.3.1.9"/>
    </reaction>
</comment>
<comment type="pathway">
    <text evidence="1">Carbohydrate biosynthesis; gluconeogenesis.</text>
</comment>
<comment type="pathway">
    <text evidence="1">Carbohydrate degradation; glycolysis; D-glyceraldehyde 3-phosphate and glycerone phosphate from D-glucose: step 2/4.</text>
</comment>
<comment type="subcellular location">
    <subcellularLocation>
        <location evidence="1">Cytoplasm</location>
    </subcellularLocation>
</comment>
<comment type="similarity">
    <text evidence="1">Belongs to the GPI family.</text>
</comment>
<comment type="sequence caution" evidence="2">
    <conflict type="erroneous initiation">
        <sequence resource="EMBL-CDS" id="AAU26848"/>
    </conflict>
</comment>
<protein>
    <recommendedName>
        <fullName evidence="1">Glucose-6-phosphate isomerase</fullName>
        <shortName evidence="1">GPI</shortName>
        <ecNumber evidence="1">5.3.1.9</ecNumber>
    </recommendedName>
    <alternativeName>
        <fullName evidence="1">Phosphoglucose isomerase</fullName>
        <shortName evidence="1">PGI</shortName>
    </alternativeName>
    <alternativeName>
        <fullName evidence="1">Phosphohexose isomerase</fullName>
        <shortName evidence="1">PHI</shortName>
    </alternativeName>
</protein>
<dbReference type="EC" id="5.3.1.9" evidence="1"/>
<dbReference type="EMBL" id="AE017354">
    <property type="protein sequence ID" value="AAU26848.1"/>
    <property type="status" value="ALT_INIT"/>
    <property type="molecule type" value="Genomic_DNA"/>
</dbReference>
<dbReference type="RefSeq" id="YP_094795.1">
    <property type="nucleotide sequence ID" value="NC_002942.5"/>
</dbReference>
<dbReference type="SMR" id="Q5ZXH2"/>
<dbReference type="STRING" id="272624.lpg0759"/>
<dbReference type="PaxDb" id="272624-lpg0759"/>
<dbReference type="KEGG" id="lpn:lpg0759"/>
<dbReference type="PATRIC" id="fig|272624.6.peg.784"/>
<dbReference type="eggNOG" id="COG0166">
    <property type="taxonomic scope" value="Bacteria"/>
</dbReference>
<dbReference type="HOGENOM" id="CLU_017947_3_1_6"/>
<dbReference type="OrthoDB" id="140919at2"/>
<dbReference type="UniPathway" id="UPA00109">
    <property type="reaction ID" value="UER00181"/>
</dbReference>
<dbReference type="UniPathway" id="UPA00138"/>
<dbReference type="Proteomes" id="UP000000609">
    <property type="component" value="Chromosome"/>
</dbReference>
<dbReference type="GO" id="GO:0005829">
    <property type="term" value="C:cytosol"/>
    <property type="evidence" value="ECO:0007669"/>
    <property type="project" value="TreeGrafter"/>
</dbReference>
<dbReference type="GO" id="GO:0097367">
    <property type="term" value="F:carbohydrate derivative binding"/>
    <property type="evidence" value="ECO:0007669"/>
    <property type="project" value="InterPro"/>
</dbReference>
<dbReference type="GO" id="GO:0004347">
    <property type="term" value="F:glucose-6-phosphate isomerase activity"/>
    <property type="evidence" value="ECO:0007669"/>
    <property type="project" value="UniProtKB-UniRule"/>
</dbReference>
<dbReference type="GO" id="GO:0048029">
    <property type="term" value="F:monosaccharide binding"/>
    <property type="evidence" value="ECO:0007669"/>
    <property type="project" value="TreeGrafter"/>
</dbReference>
<dbReference type="GO" id="GO:0006094">
    <property type="term" value="P:gluconeogenesis"/>
    <property type="evidence" value="ECO:0007669"/>
    <property type="project" value="UniProtKB-UniRule"/>
</dbReference>
<dbReference type="GO" id="GO:0051156">
    <property type="term" value="P:glucose 6-phosphate metabolic process"/>
    <property type="evidence" value="ECO:0007669"/>
    <property type="project" value="TreeGrafter"/>
</dbReference>
<dbReference type="GO" id="GO:0006096">
    <property type="term" value="P:glycolytic process"/>
    <property type="evidence" value="ECO:0007669"/>
    <property type="project" value="UniProtKB-UniRule"/>
</dbReference>
<dbReference type="CDD" id="cd05015">
    <property type="entry name" value="SIS_PGI_1"/>
    <property type="match status" value="1"/>
</dbReference>
<dbReference type="CDD" id="cd05016">
    <property type="entry name" value="SIS_PGI_2"/>
    <property type="match status" value="1"/>
</dbReference>
<dbReference type="Gene3D" id="3.40.50.10490">
    <property type="entry name" value="Glucose-6-phosphate isomerase like protein, domain 1"/>
    <property type="match status" value="2"/>
</dbReference>
<dbReference type="HAMAP" id="MF_00473">
    <property type="entry name" value="G6P_isomerase"/>
    <property type="match status" value="1"/>
</dbReference>
<dbReference type="InterPro" id="IPR001672">
    <property type="entry name" value="G6P_Isomerase"/>
</dbReference>
<dbReference type="InterPro" id="IPR018189">
    <property type="entry name" value="Phosphoglucose_isomerase_CS"/>
</dbReference>
<dbReference type="InterPro" id="IPR046348">
    <property type="entry name" value="SIS_dom_sf"/>
</dbReference>
<dbReference type="InterPro" id="IPR035476">
    <property type="entry name" value="SIS_PGI_1"/>
</dbReference>
<dbReference type="InterPro" id="IPR035482">
    <property type="entry name" value="SIS_PGI_2"/>
</dbReference>
<dbReference type="NCBIfam" id="NF001211">
    <property type="entry name" value="PRK00179.1"/>
    <property type="match status" value="1"/>
</dbReference>
<dbReference type="PANTHER" id="PTHR11469">
    <property type="entry name" value="GLUCOSE-6-PHOSPHATE ISOMERASE"/>
    <property type="match status" value="1"/>
</dbReference>
<dbReference type="PANTHER" id="PTHR11469:SF1">
    <property type="entry name" value="GLUCOSE-6-PHOSPHATE ISOMERASE"/>
    <property type="match status" value="1"/>
</dbReference>
<dbReference type="Pfam" id="PF00342">
    <property type="entry name" value="PGI"/>
    <property type="match status" value="1"/>
</dbReference>
<dbReference type="PRINTS" id="PR00662">
    <property type="entry name" value="G6PISOMERASE"/>
</dbReference>
<dbReference type="SUPFAM" id="SSF53697">
    <property type="entry name" value="SIS domain"/>
    <property type="match status" value="1"/>
</dbReference>
<dbReference type="PROSITE" id="PS00765">
    <property type="entry name" value="P_GLUCOSE_ISOMERASE_1"/>
    <property type="match status" value="1"/>
</dbReference>
<dbReference type="PROSITE" id="PS00174">
    <property type="entry name" value="P_GLUCOSE_ISOMERASE_2"/>
    <property type="match status" value="1"/>
</dbReference>
<dbReference type="PROSITE" id="PS51463">
    <property type="entry name" value="P_GLUCOSE_ISOMERASE_3"/>
    <property type="match status" value="1"/>
</dbReference>
<keyword id="KW-0963">Cytoplasm</keyword>
<keyword id="KW-0312">Gluconeogenesis</keyword>
<keyword id="KW-0324">Glycolysis</keyword>
<keyword id="KW-0413">Isomerase</keyword>
<keyword id="KW-1185">Reference proteome</keyword>
<name>G6PI_LEGPH</name>
<reference key="1">
    <citation type="journal article" date="2004" name="Science">
        <title>The genomic sequence of the accidental pathogen Legionella pneumophila.</title>
        <authorList>
            <person name="Chien M."/>
            <person name="Morozova I."/>
            <person name="Shi S."/>
            <person name="Sheng H."/>
            <person name="Chen J."/>
            <person name="Gomez S.M."/>
            <person name="Asamani G."/>
            <person name="Hill K."/>
            <person name="Nuara J."/>
            <person name="Feder M."/>
            <person name="Rineer J."/>
            <person name="Greenberg J.J."/>
            <person name="Steshenko V."/>
            <person name="Park S.H."/>
            <person name="Zhao B."/>
            <person name="Teplitskaya E."/>
            <person name="Edwards J.R."/>
            <person name="Pampou S."/>
            <person name="Georghiou A."/>
            <person name="Chou I.-C."/>
            <person name="Iannuccilli W."/>
            <person name="Ulz M.E."/>
            <person name="Kim D.H."/>
            <person name="Geringer-Sameth A."/>
            <person name="Goldsberry C."/>
            <person name="Morozov P."/>
            <person name="Fischer S.G."/>
            <person name="Segal G."/>
            <person name="Qu X."/>
            <person name="Rzhetsky A."/>
            <person name="Zhang P."/>
            <person name="Cayanis E."/>
            <person name="De Jong P.J."/>
            <person name="Ju J."/>
            <person name="Kalachikov S."/>
            <person name="Shuman H.A."/>
            <person name="Russo J.J."/>
        </authorList>
    </citation>
    <scope>NUCLEOTIDE SEQUENCE [LARGE SCALE GENOMIC DNA]</scope>
    <source>
        <strain>Philadelphia 1 / ATCC 33152 / DSM 7513</strain>
    </source>
</reference>
<sequence length="499" mass="56152">MIRNSMKSHTELLSWNLLQKEADRVRLNSDSLTCVVPDSNNYESSKQINCIEYDYSRQRVNRTIIDLLIDLANEVKLQEKIDNLINGKKINISENRPALHTALRDLGNKSIMIDGLDIMSAVINTREKIKVISNQIREKKWLGHSGLPITDIVNIGIGGSDLGPRVCINALSNYISKEFNYHFISDVDPASFNDVIAKINPQTTLFIVSSKSFTTKETLLNARKAFALYEDTASIDQHFIAVTAHPERAYQMGIKTVLPIWDWVGGRFSFCSAVNLITAIAIGYEQFVELLAGAHDVDTHVQFTDFKNNIPVLMALIGIWNNNFLNIHNLLILTYSKKLEYFVPYVQQLDMESNGKSIDVNGSMVDYATGPIVWGGLGNQAQHSYFQLLCQGTHRCVGDFITLKTNDEHEINSMCHYKMKVLSEGIQTIENPYGYIPGNMPMNHLILSDCSPYTLGALVALYEHKIFVQSVIWNINPFDQPGIESAKSAHREITLSSES</sequence>
<gene>
    <name evidence="1" type="primary">pgi</name>
    <name type="ordered locus">lpg0759</name>
</gene>
<proteinExistence type="inferred from homology"/>
<evidence type="ECO:0000255" key="1">
    <source>
        <dbReference type="HAMAP-Rule" id="MF_00473"/>
    </source>
</evidence>
<evidence type="ECO:0000305" key="2"/>
<organism>
    <name type="scientific">Legionella pneumophila subsp. pneumophila (strain Philadelphia 1 / ATCC 33152 / DSM 7513)</name>
    <dbReference type="NCBI Taxonomy" id="272624"/>
    <lineage>
        <taxon>Bacteria</taxon>
        <taxon>Pseudomonadati</taxon>
        <taxon>Pseudomonadota</taxon>
        <taxon>Gammaproteobacteria</taxon>
        <taxon>Legionellales</taxon>
        <taxon>Legionellaceae</taxon>
        <taxon>Legionella</taxon>
    </lineage>
</organism>